<name>DUS26_HUMAN</name>
<evidence type="ECO:0000255" key="1">
    <source>
        <dbReference type="PROSITE-ProRule" id="PRU00160"/>
    </source>
</evidence>
<evidence type="ECO:0000255" key="2">
    <source>
        <dbReference type="PROSITE-ProRule" id="PRU10044"/>
    </source>
</evidence>
<evidence type="ECO:0000269" key="3">
    <source>
    </source>
</evidence>
<evidence type="ECO:0000269" key="4">
    <source>
    </source>
</evidence>
<evidence type="ECO:0000269" key="5">
    <source>
    </source>
</evidence>
<evidence type="ECO:0000269" key="6">
    <source>
    </source>
</evidence>
<evidence type="ECO:0000303" key="7">
    <source>
    </source>
</evidence>
<evidence type="ECO:0000305" key="8"/>
<evidence type="ECO:0007829" key="9">
    <source>
        <dbReference type="PDB" id="2E0T"/>
    </source>
</evidence>
<evidence type="ECO:0007829" key="10">
    <source>
        <dbReference type="PDB" id="4HRF"/>
    </source>
</evidence>
<evidence type="ECO:0007829" key="11">
    <source>
        <dbReference type="PDB" id="5GTJ"/>
    </source>
</evidence>
<proteinExistence type="evidence at protein level"/>
<sequence length="211" mass="23946">MCPGNWLWASMTFMARFSRSSSRSPVRTRGTLEEMPTVQHPFLNVFELERLLYTGKTACNHADEVWPGLYLGDQDMANNRRELRRLGITHVLNASHSRWRGTPEAYEGLGIRYLGVEAHDSPAFDMSIHFQTAADFIHRALSQPGGKILVHCAVGVSRSATLVLAYLMLYHHLTLVEAIKKVKDHRGIIPNRGFLRQLLALDRRLRQGLEA</sequence>
<gene>
    <name type="primary">DUSP26</name>
    <name type="synonym">DUSP24</name>
    <name type="synonym">LDP4</name>
    <name type="synonym">MKP8</name>
    <name type="synonym">NATA1</name>
    <name type="synonym">SKRP3</name>
</gene>
<organism>
    <name type="scientific">Homo sapiens</name>
    <name type="common">Human</name>
    <dbReference type="NCBI Taxonomy" id="9606"/>
    <lineage>
        <taxon>Eukaryota</taxon>
        <taxon>Metazoa</taxon>
        <taxon>Chordata</taxon>
        <taxon>Craniata</taxon>
        <taxon>Vertebrata</taxon>
        <taxon>Euteleostomi</taxon>
        <taxon>Mammalia</taxon>
        <taxon>Eutheria</taxon>
        <taxon>Euarchontoglires</taxon>
        <taxon>Primates</taxon>
        <taxon>Haplorrhini</taxon>
        <taxon>Catarrhini</taxon>
        <taxon>Hominidae</taxon>
        <taxon>Homo</taxon>
    </lineage>
</organism>
<comment type="function">
    <text evidence="3 4 5 6">Inactivates MAPK1 and MAPK3 which leads to dephosphorylation of heat shock factor protein 4 and a reduction in its DNA-binding activity. Inhibits MAP kinase p38 by dephosphorylating it and inhibits p38-mediated apoptosis in anaplastic thyroid cancer cells. Can also induce activation of MAP kinase p38 and c-Jun N-terminal kinase (JNK).</text>
</comment>
<comment type="catalytic activity">
    <reaction evidence="2">
        <text>O-phospho-L-tyrosyl-[protein] + H2O = L-tyrosyl-[protein] + phosphate</text>
        <dbReference type="Rhea" id="RHEA:10684"/>
        <dbReference type="Rhea" id="RHEA-COMP:10136"/>
        <dbReference type="Rhea" id="RHEA-COMP:20101"/>
        <dbReference type="ChEBI" id="CHEBI:15377"/>
        <dbReference type="ChEBI" id="CHEBI:43474"/>
        <dbReference type="ChEBI" id="CHEBI:46858"/>
        <dbReference type="ChEBI" id="CHEBI:61978"/>
        <dbReference type="EC" id="3.1.3.48"/>
    </reaction>
</comment>
<comment type="catalytic activity">
    <reaction>
        <text>O-phospho-L-seryl-[protein] + H2O = L-seryl-[protein] + phosphate</text>
        <dbReference type="Rhea" id="RHEA:20629"/>
        <dbReference type="Rhea" id="RHEA-COMP:9863"/>
        <dbReference type="Rhea" id="RHEA-COMP:11604"/>
        <dbReference type="ChEBI" id="CHEBI:15377"/>
        <dbReference type="ChEBI" id="CHEBI:29999"/>
        <dbReference type="ChEBI" id="CHEBI:43474"/>
        <dbReference type="ChEBI" id="CHEBI:83421"/>
        <dbReference type="EC" id="3.1.3.16"/>
    </reaction>
</comment>
<comment type="catalytic activity">
    <reaction>
        <text>O-phospho-L-threonyl-[protein] + H2O = L-threonyl-[protein] + phosphate</text>
        <dbReference type="Rhea" id="RHEA:47004"/>
        <dbReference type="Rhea" id="RHEA-COMP:11060"/>
        <dbReference type="Rhea" id="RHEA-COMP:11605"/>
        <dbReference type="ChEBI" id="CHEBI:15377"/>
        <dbReference type="ChEBI" id="CHEBI:30013"/>
        <dbReference type="ChEBI" id="CHEBI:43474"/>
        <dbReference type="ChEBI" id="CHEBI:61977"/>
        <dbReference type="EC" id="3.1.3.16"/>
    </reaction>
</comment>
<comment type="subunit">
    <text evidence="4">Interacts with HSF4.</text>
</comment>
<comment type="interaction">
    <interactant intactId="EBI-2924519">
        <id>Q9BV47</id>
    </interactant>
    <interactant intactId="EBI-739580">
        <id>Q13137</id>
        <label>CALCOCO2</label>
    </interactant>
    <organismsDiffer>false</organismsDiffer>
    <experiments>3</experiments>
</comment>
<comment type="interaction">
    <interactant intactId="EBI-2924519">
        <id>Q9BV47</id>
    </interactant>
    <interactant intactId="EBI-3866279">
        <id>Q9BWT7</id>
        <label>CARD10</label>
    </interactant>
    <organismsDiffer>false</organismsDiffer>
    <experiments>3</experiments>
</comment>
<comment type="interaction">
    <interactant intactId="EBI-2924519">
        <id>Q9BV47</id>
    </interactant>
    <interactant intactId="EBI-5916454">
        <id>A6NEM1</id>
        <label>GOLGA6L9</label>
    </interactant>
    <organismsDiffer>false</organismsDiffer>
    <experiments>3</experiments>
</comment>
<comment type="interaction">
    <interactant intactId="EBI-2924519">
        <id>Q9BV47</id>
    </interactant>
    <interactant intactId="EBI-717919">
        <id>Q4V328</id>
        <label>GRIPAP1</label>
    </interactant>
    <organismsDiffer>false</organismsDiffer>
    <experiments>3</experiments>
</comment>
<comment type="interaction">
    <interactant intactId="EBI-2924519">
        <id>Q9BV47</id>
    </interactant>
    <interactant intactId="EBI-3044087">
        <id>Q7Z3Y8</id>
        <label>KRT27</label>
    </interactant>
    <organismsDiffer>false</organismsDiffer>
    <experiments>3</experiments>
</comment>
<comment type="interaction">
    <interactant intactId="EBI-2924519">
        <id>Q9BV47</id>
    </interactant>
    <interactant intactId="EBI-366083">
        <id>P04637</id>
        <label>TP53</label>
    </interactant>
    <organismsDiffer>false</organismsDiffer>
    <experiments>9</experiments>
</comment>
<comment type="subcellular location">
    <subcellularLocation>
        <location>Cytoplasm</location>
    </subcellularLocation>
    <subcellularLocation>
        <location>Nucleus</location>
    </subcellularLocation>
    <subcellularLocation>
        <location>Golgi apparatus</location>
    </subcellularLocation>
</comment>
<comment type="alternative products">
    <event type="alternative splicing"/>
    <isoform>
        <id>Q9BV47-1</id>
        <name>1</name>
        <sequence type="displayed"/>
    </isoform>
    <isoform>
        <id>Q9BV47-2</id>
        <name>2</name>
        <sequence type="described" ref="VSP_026406"/>
    </isoform>
</comment>
<comment type="tissue specificity">
    <text evidence="3 4 5 6">Brain. In the brain it is expressed ubiquitously except in the hippocampus. Expressed in embryonal cancers (retinoblastoma, neuroepithilioma and neuroblastoma) and in anaplatic thyroid cancer.</text>
</comment>
<comment type="similarity">
    <text evidence="8">Belongs to the protein-tyrosine phosphatase family. Non-receptor class dual specificity subfamily.</text>
</comment>
<reference key="1">
    <citation type="journal article" date="2005" name="Biochem. Biophys. Res. Commun.">
        <title>MKP-8, a novel MAPK phosphatase that inhibits p38 kinase.</title>
        <authorList>
            <person name="Vasudevan S.A."/>
            <person name="Skoko J."/>
            <person name="Wang K."/>
            <person name="Burlingame S.M."/>
            <person name="Patel P.N."/>
            <person name="Lazo J.S."/>
            <person name="Nuchtern J.G."/>
            <person name="Yang J."/>
        </authorList>
    </citation>
    <scope>NUCLEOTIDE SEQUENCE [MRNA] (ISOFORM 1)</scope>
    <scope>MUTAGENESIS OF CYS-152</scope>
    <scope>FUNCTION</scope>
    <scope>SUBCELLULAR LOCATION</scope>
    <scope>TISSUE SPECIFICITY</scope>
</reference>
<reference key="2">
    <citation type="journal article" date="2007" name="Oncogene">
        <title>A novel amplification target, DUSP26, promotes anaplastic thyroid cancer cell growth by inhibiting p38 MAPK activity.</title>
        <authorList>
            <person name="Yu W."/>
            <person name="Imoto I."/>
            <person name="Inoue J."/>
            <person name="Onda M."/>
            <person name="Emi M."/>
            <person name="Inazawa J."/>
        </authorList>
    </citation>
    <scope>NUCLEOTIDE SEQUENCE [MRNA] (ISOFORM 1)</scope>
    <scope>MUTAGENESIS OF CYS-152</scope>
    <scope>FUNCTION</scope>
    <scope>TISSUE SPECIFICITY</scope>
</reference>
<reference key="3">
    <citation type="journal article" date="2007" name="Mol. Cell. Biochem.">
        <title>Characterization of a novel low-molecular-mass dual specificity phosphatase-4 (LDP-4) expressed in brain.</title>
        <authorList>
            <person name="Takagaki K."/>
            <person name="Shima H."/>
            <person name="Tanuma N."/>
            <person name="Nomura M."/>
            <person name="Satoh T."/>
            <person name="Watanabe M."/>
            <person name="Kikuchi K."/>
        </authorList>
    </citation>
    <scope>NUCLEOTIDE SEQUENCE [MRNA] (ISOFORM 1)</scope>
    <scope>FUNCTION</scope>
    <scope>SUBCELLULAR LOCATION</scope>
    <scope>TISSUE SPECIFICITY</scope>
</reference>
<reference key="4">
    <citation type="submission" date="2003-02" db="EMBL/GenBank/DDBJ databases">
        <title>Identification of a novel dual specificity phosphatase, SKRP3.</title>
        <authorList>
            <person name="Zama T."/>
            <person name="Aoki R."/>
            <person name="Murata M."/>
            <person name="Ikeda Y."/>
        </authorList>
    </citation>
    <scope>NUCLEOTIDE SEQUENCE [MRNA] (ISOFORM 1)</scope>
</reference>
<reference key="5">
    <citation type="journal article" date="2004" name="Nat. Genet.">
        <title>Complete sequencing and characterization of 21,243 full-length human cDNAs.</title>
        <authorList>
            <person name="Ota T."/>
            <person name="Suzuki Y."/>
            <person name="Nishikawa T."/>
            <person name="Otsuki T."/>
            <person name="Sugiyama T."/>
            <person name="Irie R."/>
            <person name="Wakamatsu A."/>
            <person name="Hayashi K."/>
            <person name="Sato H."/>
            <person name="Nagai K."/>
            <person name="Kimura K."/>
            <person name="Makita H."/>
            <person name="Sekine M."/>
            <person name="Obayashi M."/>
            <person name="Nishi T."/>
            <person name="Shibahara T."/>
            <person name="Tanaka T."/>
            <person name="Ishii S."/>
            <person name="Yamamoto J."/>
            <person name="Saito K."/>
            <person name="Kawai Y."/>
            <person name="Isono Y."/>
            <person name="Nakamura Y."/>
            <person name="Nagahari K."/>
            <person name="Murakami K."/>
            <person name="Yasuda T."/>
            <person name="Iwayanagi T."/>
            <person name="Wagatsuma M."/>
            <person name="Shiratori A."/>
            <person name="Sudo H."/>
            <person name="Hosoiri T."/>
            <person name="Kaku Y."/>
            <person name="Kodaira H."/>
            <person name="Kondo H."/>
            <person name="Sugawara M."/>
            <person name="Takahashi M."/>
            <person name="Kanda K."/>
            <person name="Yokoi T."/>
            <person name="Furuya T."/>
            <person name="Kikkawa E."/>
            <person name="Omura Y."/>
            <person name="Abe K."/>
            <person name="Kamihara K."/>
            <person name="Katsuta N."/>
            <person name="Sato K."/>
            <person name="Tanikawa M."/>
            <person name="Yamazaki M."/>
            <person name="Ninomiya K."/>
            <person name="Ishibashi T."/>
            <person name="Yamashita H."/>
            <person name="Murakawa K."/>
            <person name="Fujimori K."/>
            <person name="Tanai H."/>
            <person name="Kimata M."/>
            <person name="Watanabe M."/>
            <person name="Hiraoka S."/>
            <person name="Chiba Y."/>
            <person name="Ishida S."/>
            <person name="Ono Y."/>
            <person name="Takiguchi S."/>
            <person name="Watanabe S."/>
            <person name="Yosida M."/>
            <person name="Hotuta T."/>
            <person name="Kusano J."/>
            <person name="Kanehori K."/>
            <person name="Takahashi-Fujii A."/>
            <person name="Hara H."/>
            <person name="Tanase T.-O."/>
            <person name="Nomura Y."/>
            <person name="Togiya S."/>
            <person name="Komai F."/>
            <person name="Hara R."/>
            <person name="Takeuchi K."/>
            <person name="Arita M."/>
            <person name="Imose N."/>
            <person name="Musashino K."/>
            <person name="Yuuki H."/>
            <person name="Oshima A."/>
            <person name="Sasaki N."/>
            <person name="Aotsuka S."/>
            <person name="Yoshikawa Y."/>
            <person name="Matsunawa H."/>
            <person name="Ichihara T."/>
            <person name="Shiohata N."/>
            <person name="Sano S."/>
            <person name="Moriya S."/>
            <person name="Momiyama H."/>
            <person name="Satoh N."/>
            <person name="Takami S."/>
            <person name="Terashima Y."/>
            <person name="Suzuki O."/>
            <person name="Nakagawa S."/>
            <person name="Senoh A."/>
            <person name="Mizoguchi H."/>
            <person name="Goto Y."/>
            <person name="Shimizu F."/>
            <person name="Wakebe H."/>
            <person name="Hishigaki H."/>
            <person name="Watanabe T."/>
            <person name="Sugiyama A."/>
            <person name="Takemoto M."/>
            <person name="Kawakami B."/>
            <person name="Yamazaki M."/>
            <person name="Watanabe K."/>
            <person name="Kumagai A."/>
            <person name="Itakura S."/>
            <person name="Fukuzumi Y."/>
            <person name="Fujimori Y."/>
            <person name="Komiyama M."/>
            <person name="Tashiro H."/>
            <person name="Tanigami A."/>
            <person name="Fujiwara T."/>
            <person name="Ono T."/>
            <person name="Yamada K."/>
            <person name="Fujii Y."/>
            <person name="Ozaki K."/>
            <person name="Hirao M."/>
            <person name="Ohmori Y."/>
            <person name="Kawabata A."/>
            <person name="Hikiji T."/>
            <person name="Kobatake N."/>
            <person name="Inagaki H."/>
            <person name="Ikema Y."/>
            <person name="Okamoto S."/>
            <person name="Okitani R."/>
            <person name="Kawakami T."/>
            <person name="Noguchi S."/>
            <person name="Itoh T."/>
            <person name="Shigeta K."/>
            <person name="Senba T."/>
            <person name="Matsumura K."/>
            <person name="Nakajima Y."/>
            <person name="Mizuno T."/>
            <person name="Morinaga M."/>
            <person name="Sasaki M."/>
            <person name="Togashi T."/>
            <person name="Oyama M."/>
            <person name="Hata H."/>
            <person name="Watanabe M."/>
            <person name="Komatsu T."/>
            <person name="Mizushima-Sugano J."/>
            <person name="Satoh T."/>
            <person name="Shirai Y."/>
            <person name="Takahashi Y."/>
            <person name="Nakagawa K."/>
            <person name="Okumura K."/>
            <person name="Nagase T."/>
            <person name="Nomura N."/>
            <person name="Kikuchi H."/>
            <person name="Masuho Y."/>
            <person name="Yamashita R."/>
            <person name="Nakai K."/>
            <person name="Yada T."/>
            <person name="Nakamura Y."/>
            <person name="Ohara O."/>
            <person name="Isogai T."/>
            <person name="Sugano S."/>
        </authorList>
    </citation>
    <scope>NUCLEOTIDE SEQUENCE [LARGE SCALE MRNA] (ISOFORM 1)</scope>
</reference>
<reference key="6">
    <citation type="submission" date="2005-09" db="EMBL/GenBank/DDBJ databases">
        <authorList>
            <person name="Mural R.J."/>
            <person name="Istrail S."/>
            <person name="Sutton G.G."/>
            <person name="Florea L."/>
            <person name="Halpern A.L."/>
            <person name="Mobarry C.M."/>
            <person name="Lippert R."/>
            <person name="Walenz B."/>
            <person name="Shatkay H."/>
            <person name="Dew I."/>
            <person name="Miller J.R."/>
            <person name="Flanigan M.J."/>
            <person name="Edwards N.J."/>
            <person name="Bolanos R."/>
            <person name="Fasulo D."/>
            <person name="Halldorsson B.V."/>
            <person name="Hannenhalli S."/>
            <person name="Turner R."/>
            <person name="Yooseph S."/>
            <person name="Lu F."/>
            <person name="Nusskern D.R."/>
            <person name="Shue B.C."/>
            <person name="Zheng X.H."/>
            <person name="Zhong F."/>
            <person name="Delcher A.L."/>
            <person name="Huson D.H."/>
            <person name="Kravitz S.A."/>
            <person name="Mouchard L."/>
            <person name="Reinert K."/>
            <person name="Remington K.A."/>
            <person name="Clark A.G."/>
            <person name="Waterman M.S."/>
            <person name="Eichler E.E."/>
            <person name="Adams M.D."/>
            <person name="Hunkapiller M.W."/>
            <person name="Myers E.W."/>
            <person name="Venter J.C."/>
        </authorList>
    </citation>
    <scope>NUCLEOTIDE SEQUENCE [LARGE SCALE GENOMIC DNA]</scope>
</reference>
<reference key="7">
    <citation type="journal article" date="2004" name="Genome Res.">
        <title>The status, quality, and expansion of the NIH full-length cDNA project: the Mammalian Gene Collection (MGC).</title>
        <authorList>
            <consortium name="The MGC Project Team"/>
        </authorList>
    </citation>
    <scope>NUCLEOTIDE SEQUENCE [LARGE SCALE MRNA] (ISOFORMS 1 AND 2)</scope>
    <source>
        <tissue>Brain</tissue>
        <tissue>Lung</tissue>
    </source>
</reference>
<reference key="8">
    <citation type="journal article" date="2006" name="Mol. Cell. Biol.">
        <title>Association and regulation of heat shock transcription factor 4b with both extracellular signal-regulated kinase mitogen-activated protein kinase and dual-specificity tyrosine phosphatase DUSP26.</title>
        <authorList>
            <person name="Hu Y."/>
            <person name="Mivechi N.F."/>
        </authorList>
    </citation>
    <scope>FUNCTION</scope>
    <scope>MUTAGENESIS OF CYS-152</scope>
    <scope>INTERACTION WITH HSF4</scope>
    <scope>TISSUE SPECIFICITY</scope>
</reference>
<feature type="chain" id="PRO_0000292219" description="Dual specificity protein phosphatase 26">
    <location>
        <begin position="1"/>
        <end position="211"/>
    </location>
</feature>
<feature type="domain" description="Tyrosine-protein phosphatase" evidence="1">
    <location>
        <begin position="60"/>
        <end position="207"/>
    </location>
</feature>
<feature type="active site" description="Phosphocysteine intermediate" evidence="1">
    <location>
        <position position="152"/>
    </location>
</feature>
<feature type="splice variant" id="VSP_026406" description="In isoform 2." evidence="7">
    <location>
        <begin position="1"/>
        <end position="125"/>
    </location>
</feature>
<feature type="mutagenesis site" description="Loss of activity." evidence="3 4 5">
    <original>C</original>
    <variation>A</variation>
    <variation>S</variation>
    <location>
        <position position="152"/>
    </location>
</feature>
<feature type="helix" evidence="11">
    <location>
        <begin position="45"/>
        <end position="54"/>
    </location>
</feature>
<feature type="strand" evidence="9">
    <location>
        <begin position="62"/>
        <end position="66"/>
    </location>
</feature>
<feature type="strand" evidence="9">
    <location>
        <begin position="69"/>
        <end position="72"/>
    </location>
</feature>
<feature type="helix" evidence="9">
    <location>
        <begin position="74"/>
        <end position="77"/>
    </location>
</feature>
<feature type="helix" evidence="9">
    <location>
        <begin position="80"/>
        <end position="86"/>
    </location>
</feature>
<feature type="strand" evidence="9">
    <location>
        <begin position="90"/>
        <end position="93"/>
    </location>
</feature>
<feature type="turn" evidence="10">
    <location>
        <begin position="98"/>
        <end position="100"/>
    </location>
</feature>
<feature type="helix" evidence="9">
    <location>
        <begin position="106"/>
        <end position="109"/>
    </location>
</feature>
<feature type="strand" evidence="9">
    <location>
        <begin position="112"/>
        <end position="115"/>
    </location>
</feature>
<feature type="helix" evidence="9">
    <location>
        <begin position="127"/>
        <end position="142"/>
    </location>
</feature>
<feature type="strand" evidence="9">
    <location>
        <begin position="148"/>
        <end position="151"/>
    </location>
</feature>
<feature type="strand" evidence="9">
    <location>
        <begin position="153"/>
        <end position="156"/>
    </location>
</feature>
<feature type="helix" evidence="9">
    <location>
        <begin position="157"/>
        <end position="170"/>
    </location>
</feature>
<feature type="helix" evidence="9">
    <location>
        <begin position="175"/>
        <end position="184"/>
    </location>
</feature>
<feature type="helix" evidence="9">
    <location>
        <begin position="192"/>
        <end position="207"/>
    </location>
</feature>
<dbReference type="EC" id="3.1.3.16"/>
<dbReference type="EC" id="3.1.3.48"/>
<dbReference type="EMBL" id="AY902194">
    <property type="protein sequence ID" value="AAX07132.1"/>
    <property type="molecule type" value="mRNA"/>
</dbReference>
<dbReference type="EMBL" id="AB158288">
    <property type="protein sequence ID" value="BAD82942.1"/>
    <property type="molecule type" value="mRNA"/>
</dbReference>
<dbReference type="EMBL" id="AB237597">
    <property type="protein sequence ID" value="BAE46506.1"/>
    <property type="molecule type" value="mRNA"/>
</dbReference>
<dbReference type="EMBL" id="AB103376">
    <property type="protein sequence ID" value="BAD91015.1"/>
    <property type="molecule type" value="mRNA"/>
</dbReference>
<dbReference type="EMBL" id="AK055704">
    <property type="protein sequence ID" value="BAB70991.1"/>
    <property type="molecule type" value="mRNA"/>
</dbReference>
<dbReference type="EMBL" id="CH471080">
    <property type="protein sequence ID" value="EAW63392.1"/>
    <property type="molecule type" value="Genomic_DNA"/>
</dbReference>
<dbReference type="EMBL" id="CH471080">
    <property type="protein sequence ID" value="EAW63393.1"/>
    <property type="molecule type" value="Genomic_DNA"/>
</dbReference>
<dbReference type="EMBL" id="CH471080">
    <property type="protein sequence ID" value="EAW63394.1"/>
    <property type="molecule type" value="Genomic_DNA"/>
</dbReference>
<dbReference type="EMBL" id="BC001613">
    <property type="protein sequence ID" value="AAH01613.1"/>
    <property type="molecule type" value="mRNA"/>
</dbReference>
<dbReference type="EMBL" id="BC003115">
    <property type="protein sequence ID" value="AAH03115.1"/>
    <property type="molecule type" value="mRNA"/>
</dbReference>
<dbReference type="EMBL" id="BC067804">
    <property type="protein sequence ID" value="AAH67804.1"/>
    <property type="molecule type" value="mRNA"/>
</dbReference>
<dbReference type="CCDS" id="CCDS6092.1">
    <molecule id="Q9BV47-1"/>
</dbReference>
<dbReference type="RefSeq" id="NP_001292044.1">
    <molecule id="Q9BV47-1"/>
    <property type="nucleotide sequence ID" value="NM_001305115.2"/>
</dbReference>
<dbReference type="RefSeq" id="NP_001292045.1">
    <molecule id="Q9BV47-1"/>
    <property type="nucleotide sequence ID" value="NM_001305116.2"/>
</dbReference>
<dbReference type="RefSeq" id="NP_076930.1">
    <molecule id="Q9BV47-1"/>
    <property type="nucleotide sequence ID" value="NM_024025.3"/>
</dbReference>
<dbReference type="PDB" id="2E0T">
    <property type="method" value="X-ray"/>
    <property type="resolution" value="1.67 A"/>
    <property type="chains" value="A=61-211"/>
</dbReference>
<dbReference type="PDB" id="4B04">
    <property type="method" value="X-ray"/>
    <property type="resolution" value="2.20 A"/>
    <property type="chains" value="A/B/C/D=61-211"/>
</dbReference>
<dbReference type="PDB" id="4HRF">
    <property type="method" value="X-ray"/>
    <property type="resolution" value="1.68 A"/>
    <property type="chains" value="A/B/C/D=61-211"/>
</dbReference>
<dbReference type="PDB" id="5GTJ">
    <property type="method" value="X-ray"/>
    <property type="resolution" value="2.00 A"/>
    <property type="chains" value="A/B/C/D=39-211"/>
</dbReference>
<dbReference type="PDBsum" id="2E0T"/>
<dbReference type="PDBsum" id="4B04"/>
<dbReference type="PDBsum" id="4HRF"/>
<dbReference type="PDBsum" id="5GTJ"/>
<dbReference type="SMR" id="Q9BV47"/>
<dbReference type="BioGRID" id="122457">
    <property type="interactions" value="57"/>
</dbReference>
<dbReference type="FunCoup" id="Q9BV47">
    <property type="interactions" value="298"/>
</dbReference>
<dbReference type="IntAct" id="Q9BV47">
    <property type="interactions" value="16"/>
</dbReference>
<dbReference type="MINT" id="Q9BV47"/>
<dbReference type="STRING" id="9606.ENSP00000256261"/>
<dbReference type="BindingDB" id="Q9BV47"/>
<dbReference type="ChEMBL" id="CHEMBL2295562"/>
<dbReference type="DEPOD" id="DUSP26"/>
<dbReference type="GlyGen" id="Q9BV47">
    <property type="glycosylation" value="1 site"/>
</dbReference>
<dbReference type="iPTMnet" id="Q9BV47"/>
<dbReference type="PhosphoSitePlus" id="Q9BV47"/>
<dbReference type="BioMuta" id="DUSP26"/>
<dbReference type="DMDM" id="74752374"/>
<dbReference type="MassIVE" id="Q9BV47"/>
<dbReference type="PaxDb" id="9606-ENSP00000256261"/>
<dbReference type="PeptideAtlas" id="Q9BV47"/>
<dbReference type="ProteomicsDB" id="79169">
    <molecule id="Q9BV47-1"/>
</dbReference>
<dbReference type="Antibodypedia" id="10741">
    <property type="antibodies" value="215 antibodies from 31 providers"/>
</dbReference>
<dbReference type="DNASU" id="78986"/>
<dbReference type="Ensembl" id="ENST00000256261.9">
    <molecule id="Q9BV47-1"/>
    <property type="protein sequence ID" value="ENSP00000256261.4"/>
    <property type="gene ID" value="ENSG00000133878.9"/>
</dbReference>
<dbReference type="Ensembl" id="ENST00000523956.1">
    <molecule id="Q9BV47-1"/>
    <property type="protein sequence ID" value="ENSP00000429176.1"/>
    <property type="gene ID" value="ENSG00000133878.9"/>
</dbReference>
<dbReference type="GeneID" id="78986"/>
<dbReference type="KEGG" id="hsa:78986"/>
<dbReference type="MANE-Select" id="ENST00000256261.9">
    <property type="protein sequence ID" value="ENSP00000256261.4"/>
    <property type="RefSeq nucleotide sequence ID" value="NM_024025.3"/>
    <property type="RefSeq protein sequence ID" value="NP_076930.1"/>
</dbReference>
<dbReference type="UCSC" id="uc003xjp.4">
    <molecule id="Q9BV47-1"/>
    <property type="organism name" value="human"/>
</dbReference>
<dbReference type="AGR" id="HGNC:28161"/>
<dbReference type="CTD" id="78986"/>
<dbReference type="DisGeNET" id="78986"/>
<dbReference type="GeneCards" id="DUSP26"/>
<dbReference type="HGNC" id="HGNC:28161">
    <property type="gene designation" value="DUSP26"/>
</dbReference>
<dbReference type="HPA" id="ENSG00000133878">
    <property type="expression patterns" value="Group enriched (skeletal muscle, tongue)"/>
</dbReference>
<dbReference type="MIM" id="618368">
    <property type="type" value="gene"/>
</dbReference>
<dbReference type="neXtProt" id="NX_Q9BV47"/>
<dbReference type="OpenTargets" id="ENSG00000133878"/>
<dbReference type="PharmGKB" id="PA142671921"/>
<dbReference type="VEuPathDB" id="HostDB:ENSG00000133878"/>
<dbReference type="eggNOG" id="KOG1716">
    <property type="taxonomic scope" value="Eukaryota"/>
</dbReference>
<dbReference type="GeneTree" id="ENSGT00940000158107"/>
<dbReference type="HOGENOM" id="CLU_027074_11_3_1"/>
<dbReference type="InParanoid" id="Q9BV47"/>
<dbReference type="OMA" id="MSIHFQA"/>
<dbReference type="OrthoDB" id="2017893at2759"/>
<dbReference type="PAN-GO" id="Q9BV47">
    <property type="GO annotations" value="4 GO annotations based on evolutionary models"/>
</dbReference>
<dbReference type="PhylomeDB" id="Q9BV47"/>
<dbReference type="TreeFam" id="TF105128"/>
<dbReference type="BRENDA" id="3.1.3.16">
    <property type="organism ID" value="2681"/>
</dbReference>
<dbReference type="PathwayCommons" id="Q9BV47"/>
<dbReference type="SignaLink" id="Q9BV47"/>
<dbReference type="SIGNOR" id="Q9BV47"/>
<dbReference type="BioGRID-ORCS" id="78986">
    <property type="hits" value="17 hits in 1090 CRISPR screens"/>
</dbReference>
<dbReference type="EvolutionaryTrace" id="Q9BV47"/>
<dbReference type="GenomeRNAi" id="78986"/>
<dbReference type="Pharos" id="Q9BV47">
    <property type="development level" value="Tbio"/>
</dbReference>
<dbReference type="PRO" id="PR:Q9BV47"/>
<dbReference type="Proteomes" id="UP000005640">
    <property type="component" value="Chromosome 8"/>
</dbReference>
<dbReference type="RNAct" id="Q9BV47">
    <property type="molecule type" value="protein"/>
</dbReference>
<dbReference type="Bgee" id="ENSG00000133878">
    <property type="expression patterns" value="Expressed in hindlimb stylopod muscle and 156 other cell types or tissues"/>
</dbReference>
<dbReference type="ExpressionAtlas" id="Q9BV47">
    <property type="expression patterns" value="baseline and differential"/>
</dbReference>
<dbReference type="GO" id="GO:0005737">
    <property type="term" value="C:cytoplasm"/>
    <property type="evidence" value="ECO:0000314"/>
    <property type="project" value="UniProtKB"/>
</dbReference>
<dbReference type="GO" id="GO:0070062">
    <property type="term" value="C:extracellular exosome"/>
    <property type="evidence" value="ECO:0007005"/>
    <property type="project" value="UniProtKB"/>
</dbReference>
<dbReference type="GO" id="GO:0005794">
    <property type="term" value="C:Golgi apparatus"/>
    <property type="evidence" value="ECO:0000314"/>
    <property type="project" value="UniProtKB"/>
</dbReference>
<dbReference type="GO" id="GO:0005654">
    <property type="term" value="C:nucleoplasm"/>
    <property type="evidence" value="ECO:0000314"/>
    <property type="project" value="HPA"/>
</dbReference>
<dbReference type="GO" id="GO:0005634">
    <property type="term" value="C:nucleus"/>
    <property type="evidence" value="ECO:0000314"/>
    <property type="project" value="UniProtKB"/>
</dbReference>
<dbReference type="GO" id="GO:0033549">
    <property type="term" value="F:MAP kinase phosphatase activity"/>
    <property type="evidence" value="ECO:0000318"/>
    <property type="project" value="GO_Central"/>
</dbReference>
<dbReference type="GO" id="GO:0002039">
    <property type="term" value="F:p53 binding"/>
    <property type="evidence" value="ECO:0000353"/>
    <property type="project" value="UniProtKB"/>
</dbReference>
<dbReference type="GO" id="GO:0004721">
    <property type="term" value="F:phosphoprotein phosphatase activity"/>
    <property type="evidence" value="ECO:0000314"/>
    <property type="project" value="UniProtKB"/>
</dbReference>
<dbReference type="GO" id="GO:0004722">
    <property type="term" value="F:protein serine/threonine phosphatase activity"/>
    <property type="evidence" value="ECO:0007669"/>
    <property type="project" value="UniProtKB-EC"/>
</dbReference>
<dbReference type="GO" id="GO:0004725">
    <property type="term" value="F:protein tyrosine phosphatase activity"/>
    <property type="evidence" value="ECO:0007669"/>
    <property type="project" value="UniProtKB-EC"/>
</dbReference>
<dbReference type="GO" id="GO:0008138">
    <property type="term" value="F:protein tyrosine/serine/threonine phosphatase activity"/>
    <property type="evidence" value="ECO:0000314"/>
    <property type="project" value="GO_Central"/>
</dbReference>
<dbReference type="GO" id="GO:0061629">
    <property type="term" value="F:RNA polymerase II-specific DNA-binding transcription factor binding"/>
    <property type="evidence" value="ECO:0000353"/>
    <property type="project" value="UniProtKB"/>
</dbReference>
<dbReference type="GO" id="GO:0070373">
    <property type="term" value="P:negative regulation of ERK1 and ERK2 cascade"/>
    <property type="evidence" value="ECO:0000314"/>
    <property type="project" value="UniProtKB"/>
</dbReference>
<dbReference type="GO" id="GO:0043409">
    <property type="term" value="P:negative regulation of MAPK cascade"/>
    <property type="evidence" value="ECO:0000318"/>
    <property type="project" value="GO_Central"/>
</dbReference>
<dbReference type="GO" id="GO:0000122">
    <property type="term" value="P:negative regulation of transcription by RNA polymerase II"/>
    <property type="evidence" value="ECO:0000314"/>
    <property type="project" value="UniProtKB"/>
</dbReference>
<dbReference type="GO" id="GO:0045785">
    <property type="term" value="P:positive regulation of cell adhesion"/>
    <property type="evidence" value="ECO:0000315"/>
    <property type="project" value="UniProtKB"/>
</dbReference>
<dbReference type="GO" id="GO:0006470">
    <property type="term" value="P:protein dephosphorylation"/>
    <property type="evidence" value="ECO:0000314"/>
    <property type="project" value="UniProtKB"/>
</dbReference>
<dbReference type="CDD" id="cd14578">
    <property type="entry name" value="DUSP26"/>
    <property type="match status" value="1"/>
</dbReference>
<dbReference type="FunFam" id="3.90.190.10:FF:000037">
    <property type="entry name" value="dual specificity protein phosphatase 26"/>
    <property type="match status" value="1"/>
</dbReference>
<dbReference type="Gene3D" id="3.90.190.10">
    <property type="entry name" value="Protein tyrosine phosphatase superfamily"/>
    <property type="match status" value="1"/>
</dbReference>
<dbReference type="InterPro" id="IPR020405">
    <property type="entry name" value="Atypical_DUSP_subfamA"/>
</dbReference>
<dbReference type="InterPro" id="IPR000340">
    <property type="entry name" value="Dual-sp_phosphatase_cat-dom"/>
</dbReference>
<dbReference type="InterPro" id="IPR029021">
    <property type="entry name" value="Prot-tyrosine_phosphatase-like"/>
</dbReference>
<dbReference type="InterPro" id="IPR016130">
    <property type="entry name" value="Tyr_Pase_AS"/>
</dbReference>
<dbReference type="InterPro" id="IPR000387">
    <property type="entry name" value="Tyr_Pase_dom"/>
</dbReference>
<dbReference type="InterPro" id="IPR020422">
    <property type="entry name" value="TYR_PHOSPHATASE_DUAL_dom"/>
</dbReference>
<dbReference type="PANTHER" id="PTHR45682">
    <property type="entry name" value="AGAP008228-PA"/>
    <property type="match status" value="1"/>
</dbReference>
<dbReference type="PANTHER" id="PTHR45682:SF8">
    <property type="entry name" value="DUAL SPECIFICITY PROTEIN PHOSPHATASE 26"/>
    <property type="match status" value="1"/>
</dbReference>
<dbReference type="Pfam" id="PF00782">
    <property type="entry name" value="DSPc"/>
    <property type="match status" value="1"/>
</dbReference>
<dbReference type="PRINTS" id="PR01908">
    <property type="entry name" value="ADSPHPHTASE"/>
</dbReference>
<dbReference type="PRINTS" id="PR01909">
    <property type="entry name" value="ADSPHPHTASEA"/>
</dbReference>
<dbReference type="SMART" id="SM00195">
    <property type="entry name" value="DSPc"/>
    <property type="match status" value="1"/>
</dbReference>
<dbReference type="SUPFAM" id="SSF52799">
    <property type="entry name" value="(Phosphotyrosine protein) phosphatases II"/>
    <property type="match status" value="1"/>
</dbReference>
<dbReference type="PROSITE" id="PS00383">
    <property type="entry name" value="TYR_PHOSPHATASE_1"/>
    <property type="match status" value="1"/>
</dbReference>
<dbReference type="PROSITE" id="PS50056">
    <property type="entry name" value="TYR_PHOSPHATASE_2"/>
    <property type="match status" value="1"/>
</dbReference>
<dbReference type="PROSITE" id="PS50054">
    <property type="entry name" value="TYR_PHOSPHATASE_DUAL"/>
    <property type="match status" value="1"/>
</dbReference>
<keyword id="KW-0002">3D-structure</keyword>
<keyword id="KW-0025">Alternative splicing</keyword>
<keyword id="KW-0963">Cytoplasm</keyword>
<keyword id="KW-0333">Golgi apparatus</keyword>
<keyword id="KW-0378">Hydrolase</keyword>
<keyword id="KW-0539">Nucleus</keyword>
<keyword id="KW-0904">Protein phosphatase</keyword>
<keyword id="KW-1267">Proteomics identification</keyword>
<keyword id="KW-1185">Reference proteome</keyword>
<accession>Q9BV47</accession>
<accession>D3DSV8</accession>
<accession>Q9BTW0</accession>
<protein>
    <recommendedName>
        <fullName>Dual specificity protein phosphatase 26</fullName>
        <ecNumber>3.1.3.16</ecNumber>
        <ecNumber>3.1.3.48</ecNumber>
    </recommendedName>
    <alternativeName>
        <fullName>Dual specificity phosphatase SKRP3</fullName>
    </alternativeName>
    <alternativeName>
        <fullName>Low-molecular-mass dual-specificity phosphatase 4</fullName>
        <shortName>DSP-4</shortName>
        <shortName>LDP-4</shortName>
    </alternativeName>
    <alternativeName>
        <fullName>Mitogen-activated protein kinase phosphatase 8</fullName>
        <shortName>MAP kinase phosphatase 8</shortName>
        <shortName>MKP-8</shortName>
    </alternativeName>
    <alternativeName>
        <fullName>Novel amplified gene in thyroid anaplastic cancer</fullName>
    </alternativeName>
</protein>